<keyword id="KW-0963">Cytoplasm</keyword>
<keyword id="KW-0227">DNA damage</keyword>
<keyword id="KW-0233">DNA recombination</keyword>
<keyword id="KW-0234">DNA repair</keyword>
<keyword id="KW-0238">DNA-binding</keyword>
<name>RUVA_RHOE4</name>
<comment type="function">
    <text evidence="1">The RuvA-RuvB-RuvC complex processes Holliday junction (HJ) DNA during genetic recombination and DNA repair, while the RuvA-RuvB complex plays an important role in the rescue of blocked DNA replication forks via replication fork reversal (RFR). RuvA specifically binds to HJ cruciform DNA, conferring on it an open structure. The RuvB hexamer acts as an ATP-dependent pump, pulling dsDNA into and through the RuvAB complex. HJ branch migration allows RuvC to scan DNA until it finds its consensus sequence, where it cleaves and resolves the cruciform DNA.</text>
</comment>
<comment type="subunit">
    <text evidence="1">Homotetramer. Forms an RuvA(8)-RuvB(12)-Holliday junction (HJ) complex. HJ DNA is sandwiched between 2 RuvA tetramers; dsDNA enters through RuvA and exits via RuvB. An RuvB hexamer assembles on each DNA strand where it exits the tetramer. Each RuvB hexamer is contacted by two RuvA subunits (via domain III) on 2 adjacent RuvB subunits; this complex drives branch migration. In the full resolvosome a probable DNA-RuvA(4)-RuvB(12)-RuvC(2) complex forms which resolves the HJ.</text>
</comment>
<comment type="subcellular location">
    <subcellularLocation>
        <location evidence="1">Cytoplasm</location>
    </subcellularLocation>
</comment>
<comment type="domain">
    <text evidence="1">Has three domains with a flexible linker between the domains II and III and assumes an 'L' shape. Domain III is highly mobile and contacts RuvB.</text>
</comment>
<comment type="similarity">
    <text evidence="1">Belongs to the RuvA family.</text>
</comment>
<feature type="chain" id="PRO_1000202000" description="Holliday junction branch migration complex subunit RuvA">
    <location>
        <begin position="1"/>
        <end position="199"/>
    </location>
</feature>
<feature type="region of interest" description="Domain I" evidence="1">
    <location>
        <begin position="1"/>
        <end position="63"/>
    </location>
</feature>
<feature type="region of interest" description="Domain II" evidence="1">
    <location>
        <begin position="64"/>
        <end position="141"/>
    </location>
</feature>
<feature type="region of interest" description="Flexible linker" evidence="1">
    <location>
        <begin position="141"/>
        <end position="145"/>
    </location>
</feature>
<feature type="region of interest" description="Domain III" evidence="1">
    <location>
        <begin position="146"/>
        <end position="199"/>
    </location>
</feature>
<reference key="1">
    <citation type="submission" date="2005-03" db="EMBL/GenBank/DDBJ databases">
        <title>Comparison of the complete genome sequences of Rhodococcus erythropolis PR4 and Rhodococcus opacus B4.</title>
        <authorList>
            <person name="Takarada H."/>
            <person name="Sekine M."/>
            <person name="Hosoyama A."/>
            <person name="Yamada R."/>
            <person name="Fujisawa T."/>
            <person name="Omata S."/>
            <person name="Shimizu A."/>
            <person name="Tsukatani N."/>
            <person name="Tanikawa S."/>
            <person name="Fujita N."/>
            <person name="Harayama S."/>
        </authorList>
    </citation>
    <scope>NUCLEOTIDE SEQUENCE [LARGE SCALE GENOMIC DNA]</scope>
    <source>
        <strain>PR4 / NBRC 100887</strain>
    </source>
</reference>
<sequence length="199" mass="20777">MIASVRGEVLDIALDHAVIEASGVGYRVNATPVTLGALHRGSEARLFTTMIVREDSMTLYGFSDTESKDLFSLLQTVSGVGPRLAMATLAVLEPDALRRALSEGNLTALTRVPGIGKRGAERMVVELRDKVDAVATTAGAASGAVVGSSIRDQIVEALEGLGFPIKQAEQATDSVLAESPEATTSVALRSALSLLGKTR</sequence>
<dbReference type="EMBL" id="AP008957">
    <property type="protein sequence ID" value="BAH33632.1"/>
    <property type="molecule type" value="Genomic_DNA"/>
</dbReference>
<dbReference type="RefSeq" id="WP_020907639.1">
    <property type="nucleotide sequence ID" value="NC_012490.1"/>
</dbReference>
<dbReference type="SMR" id="C0ZZ47"/>
<dbReference type="KEGG" id="rer:RER_29240"/>
<dbReference type="PATRIC" id="fig|234621.6.peg.3423"/>
<dbReference type="eggNOG" id="COG0632">
    <property type="taxonomic scope" value="Bacteria"/>
</dbReference>
<dbReference type="HOGENOM" id="CLU_087936_2_1_11"/>
<dbReference type="Proteomes" id="UP000002204">
    <property type="component" value="Chromosome"/>
</dbReference>
<dbReference type="GO" id="GO:0005737">
    <property type="term" value="C:cytoplasm"/>
    <property type="evidence" value="ECO:0007669"/>
    <property type="project" value="UniProtKB-SubCell"/>
</dbReference>
<dbReference type="GO" id="GO:0009379">
    <property type="term" value="C:Holliday junction helicase complex"/>
    <property type="evidence" value="ECO:0007669"/>
    <property type="project" value="InterPro"/>
</dbReference>
<dbReference type="GO" id="GO:0048476">
    <property type="term" value="C:Holliday junction resolvase complex"/>
    <property type="evidence" value="ECO:0007669"/>
    <property type="project" value="UniProtKB-UniRule"/>
</dbReference>
<dbReference type="GO" id="GO:0005524">
    <property type="term" value="F:ATP binding"/>
    <property type="evidence" value="ECO:0007669"/>
    <property type="project" value="InterPro"/>
</dbReference>
<dbReference type="GO" id="GO:0000400">
    <property type="term" value="F:four-way junction DNA binding"/>
    <property type="evidence" value="ECO:0007669"/>
    <property type="project" value="UniProtKB-UniRule"/>
</dbReference>
<dbReference type="GO" id="GO:0009378">
    <property type="term" value="F:four-way junction helicase activity"/>
    <property type="evidence" value="ECO:0007669"/>
    <property type="project" value="InterPro"/>
</dbReference>
<dbReference type="GO" id="GO:0006310">
    <property type="term" value="P:DNA recombination"/>
    <property type="evidence" value="ECO:0007669"/>
    <property type="project" value="UniProtKB-UniRule"/>
</dbReference>
<dbReference type="GO" id="GO:0006281">
    <property type="term" value="P:DNA repair"/>
    <property type="evidence" value="ECO:0007669"/>
    <property type="project" value="UniProtKB-UniRule"/>
</dbReference>
<dbReference type="CDD" id="cd14332">
    <property type="entry name" value="UBA_RuvA_C"/>
    <property type="match status" value="1"/>
</dbReference>
<dbReference type="FunFam" id="2.40.50.140:FF:000083">
    <property type="entry name" value="Holliday junction ATP-dependent DNA helicase RuvA"/>
    <property type="match status" value="1"/>
</dbReference>
<dbReference type="Gene3D" id="1.10.150.20">
    <property type="entry name" value="5' to 3' exonuclease, C-terminal subdomain"/>
    <property type="match status" value="1"/>
</dbReference>
<dbReference type="Gene3D" id="1.10.8.10">
    <property type="entry name" value="DNA helicase RuvA subunit, C-terminal domain"/>
    <property type="match status" value="1"/>
</dbReference>
<dbReference type="Gene3D" id="2.40.50.140">
    <property type="entry name" value="Nucleic acid-binding proteins"/>
    <property type="match status" value="1"/>
</dbReference>
<dbReference type="HAMAP" id="MF_00031">
    <property type="entry name" value="DNA_HJ_migration_RuvA"/>
    <property type="match status" value="1"/>
</dbReference>
<dbReference type="InterPro" id="IPR013849">
    <property type="entry name" value="DNA_helicase_Holl-junc_RuvA_I"/>
</dbReference>
<dbReference type="InterPro" id="IPR012340">
    <property type="entry name" value="NA-bd_OB-fold"/>
</dbReference>
<dbReference type="InterPro" id="IPR000085">
    <property type="entry name" value="RuvA"/>
</dbReference>
<dbReference type="InterPro" id="IPR010994">
    <property type="entry name" value="RuvA_2-like"/>
</dbReference>
<dbReference type="InterPro" id="IPR011114">
    <property type="entry name" value="RuvA_C"/>
</dbReference>
<dbReference type="InterPro" id="IPR036267">
    <property type="entry name" value="RuvA_C_sf"/>
</dbReference>
<dbReference type="NCBIfam" id="TIGR00084">
    <property type="entry name" value="ruvA"/>
    <property type="match status" value="1"/>
</dbReference>
<dbReference type="Pfam" id="PF14520">
    <property type="entry name" value="HHH_5"/>
    <property type="match status" value="1"/>
</dbReference>
<dbReference type="Pfam" id="PF07499">
    <property type="entry name" value="RuvA_C"/>
    <property type="match status" value="1"/>
</dbReference>
<dbReference type="Pfam" id="PF01330">
    <property type="entry name" value="RuvA_N"/>
    <property type="match status" value="1"/>
</dbReference>
<dbReference type="SUPFAM" id="SSF46929">
    <property type="entry name" value="DNA helicase RuvA subunit, C-terminal domain"/>
    <property type="match status" value="1"/>
</dbReference>
<dbReference type="SUPFAM" id="SSF50249">
    <property type="entry name" value="Nucleic acid-binding proteins"/>
    <property type="match status" value="1"/>
</dbReference>
<dbReference type="SUPFAM" id="SSF47781">
    <property type="entry name" value="RuvA domain 2-like"/>
    <property type="match status" value="1"/>
</dbReference>
<protein>
    <recommendedName>
        <fullName evidence="1">Holliday junction branch migration complex subunit RuvA</fullName>
    </recommendedName>
</protein>
<proteinExistence type="inferred from homology"/>
<accession>C0ZZ47</accession>
<organism>
    <name type="scientific">Rhodococcus erythropolis (strain PR4 / NBRC 100887)</name>
    <dbReference type="NCBI Taxonomy" id="234621"/>
    <lineage>
        <taxon>Bacteria</taxon>
        <taxon>Bacillati</taxon>
        <taxon>Actinomycetota</taxon>
        <taxon>Actinomycetes</taxon>
        <taxon>Mycobacteriales</taxon>
        <taxon>Nocardiaceae</taxon>
        <taxon>Rhodococcus</taxon>
        <taxon>Rhodococcus erythropolis group</taxon>
    </lineage>
</organism>
<evidence type="ECO:0000255" key="1">
    <source>
        <dbReference type="HAMAP-Rule" id="MF_00031"/>
    </source>
</evidence>
<gene>
    <name evidence="1" type="primary">ruvA</name>
    <name type="ordered locus">RER_29240</name>
</gene>